<organism>
    <name type="scientific">Salmonella heidelberg (strain SL476)</name>
    <dbReference type="NCBI Taxonomy" id="454169"/>
    <lineage>
        <taxon>Bacteria</taxon>
        <taxon>Pseudomonadati</taxon>
        <taxon>Pseudomonadota</taxon>
        <taxon>Gammaproteobacteria</taxon>
        <taxon>Enterobacterales</taxon>
        <taxon>Enterobacteriaceae</taxon>
        <taxon>Salmonella</taxon>
    </lineage>
</organism>
<accession>B4TC80</accession>
<keyword id="KW-0963">Cytoplasm</keyword>
<keyword id="KW-0489">Methyltransferase</keyword>
<keyword id="KW-0698">rRNA processing</keyword>
<keyword id="KW-0949">S-adenosyl-L-methionine</keyword>
<keyword id="KW-0808">Transferase</keyword>
<feature type="chain" id="PRO_1000188532" description="Ribosomal RNA large subunit methyltransferase F">
    <location>
        <begin position="1"/>
        <end position="308"/>
    </location>
</feature>
<evidence type="ECO:0000255" key="1">
    <source>
        <dbReference type="HAMAP-Rule" id="MF_01848"/>
    </source>
</evidence>
<protein>
    <recommendedName>
        <fullName evidence="1">Ribosomal RNA large subunit methyltransferase F</fullName>
        <ecNumber evidence="1">2.1.1.181</ecNumber>
    </recommendedName>
    <alternativeName>
        <fullName evidence="1">23S rRNA mA1618 methyltransferase</fullName>
    </alternativeName>
    <alternativeName>
        <fullName evidence="1">rRNA adenine N-6-methyltransferase</fullName>
    </alternativeName>
</protein>
<name>RLMF_SALHS</name>
<gene>
    <name evidence="1" type="primary">rlmF</name>
    <name type="ordered locus">SeHA_C0953</name>
</gene>
<proteinExistence type="inferred from homology"/>
<comment type="function">
    <text evidence="1">Specifically methylates the adenine in position 1618 of 23S rRNA.</text>
</comment>
<comment type="catalytic activity">
    <reaction evidence="1">
        <text>adenosine(1618) in 23S rRNA + S-adenosyl-L-methionine = N(6)-methyladenosine(1618) in 23S rRNA + S-adenosyl-L-homocysteine + H(+)</text>
        <dbReference type="Rhea" id="RHEA:16497"/>
        <dbReference type="Rhea" id="RHEA-COMP:10229"/>
        <dbReference type="Rhea" id="RHEA-COMP:10231"/>
        <dbReference type="ChEBI" id="CHEBI:15378"/>
        <dbReference type="ChEBI" id="CHEBI:57856"/>
        <dbReference type="ChEBI" id="CHEBI:59789"/>
        <dbReference type="ChEBI" id="CHEBI:74411"/>
        <dbReference type="ChEBI" id="CHEBI:74449"/>
        <dbReference type="EC" id="2.1.1.181"/>
    </reaction>
</comment>
<comment type="subcellular location">
    <subcellularLocation>
        <location evidence="1">Cytoplasm</location>
    </subcellularLocation>
</comment>
<comment type="similarity">
    <text evidence="1">Belongs to the methyltransferase superfamily. METTL16/RlmF family.</text>
</comment>
<dbReference type="EC" id="2.1.1.181" evidence="1"/>
<dbReference type="EMBL" id="CP001120">
    <property type="protein sequence ID" value="ACF66132.1"/>
    <property type="molecule type" value="Genomic_DNA"/>
</dbReference>
<dbReference type="RefSeq" id="WP_001275965.1">
    <property type="nucleotide sequence ID" value="NC_011083.1"/>
</dbReference>
<dbReference type="SMR" id="B4TC80"/>
<dbReference type="KEGG" id="seh:SeHA_C0953"/>
<dbReference type="HOGENOM" id="CLU_027534_3_0_6"/>
<dbReference type="Proteomes" id="UP000001866">
    <property type="component" value="Chromosome"/>
</dbReference>
<dbReference type="GO" id="GO:0005737">
    <property type="term" value="C:cytoplasm"/>
    <property type="evidence" value="ECO:0007669"/>
    <property type="project" value="UniProtKB-SubCell"/>
</dbReference>
<dbReference type="GO" id="GO:0052907">
    <property type="term" value="F:23S rRNA (adenine(1618)-N(6))-methyltransferase activity"/>
    <property type="evidence" value="ECO:0007669"/>
    <property type="project" value="UniProtKB-EC"/>
</dbReference>
<dbReference type="GO" id="GO:0070475">
    <property type="term" value="P:rRNA base methylation"/>
    <property type="evidence" value="ECO:0007669"/>
    <property type="project" value="TreeGrafter"/>
</dbReference>
<dbReference type="FunFam" id="3.40.50.150:FF:000045">
    <property type="entry name" value="Ribosomal RNA large subunit methyltransferase F"/>
    <property type="match status" value="1"/>
</dbReference>
<dbReference type="Gene3D" id="3.40.50.150">
    <property type="entry name" value="Vaccinia Virus protein VP39"/>
    <property type="match status" value="1"/>
</dbReference>
<dbReference type="HAMAP" id="MF_01848">
    <property type="entry name" value="23SrRNA_methyltr_F"/>
    <property type="match status" value="1"/>
</dbReference>
<dbReference type="InterPro" id="IPR010286">
    <property type="entry name" value="METTL16/RlmF"/>
</dbReference>
<dbReference type="InterPro" id="IPR016909">
    <property type="entry name" value="rRNA_lsu_MeTfrase_F"/>
</dbReference>
<dbReference type="InterPro" id="IPR029063">
    <property type="entry name" value="SAM-dependent_MTases_sf"/>
</dbReference>
<dbReference type="NCBIfam" id="NF008725">
    <property type="entry name" value="PRK11727.1"/>
    <property type="match status" value="1"/>
</dbReference>
<dbReference type="PANTHER" id="PTHR13393:SF0">
    <property type="entry name" value="RNA N6-ADENOSINE-METHYLTRANSFERASE METTL16"/>
    <property type="match status" value="1"/>
</dbReference>
<dbReference type="PANTHER" id="PTHR13393">
    <property type="entry name" value="SAM-DEPENDENT METHYLTRANSFERASE"/>
    <property type="match status" value="1"/>
</dbReference>
<dbReference type="Pfam" id="PF05971">
    <property type="entry name" value="Methyltransf_10"/>
    <property type="match status" value="1"/>
</dbReference>
<dbReference type="PIRSF" id="PIRSF029038">
    <property type="entry name" value="Mtase_YbiN_prd"/>
    <property type="match status" value="1"/>
</dbReference>
<dbReference type="SUPFAM" id="SSF53335">
    <property type="entry name" value="S-adenosyl-L-methionine-dependent methyltransferases"/>
    <property type="match status" value="1"/>
</dbReference>
<reference key="1">
    <citation type="journal article" date="2011" name="J. Bacteriol.">
        <title>Comparative genomics of 28 Salmonella enterica isolates: evidence for CRISPR-mediated adaptive sublineage evolution.</title>
        <authorList>
            <person name="Fricke W.F."/>
            <person name="Mammel M.K."/>
            <person name="McDermott P.F."/>
            <person name="Tartera C."/>
            <person name="White D.G."/>
            <person name="Leclerc J.E."/>
            <person name="Ravel J."/>
            <person name="Cebula T.A."/>
        </authorList>
    </citation>
    <scope>NUCLEOTIDE SEQUENCE [LARGE SCALE GENOMIC DNA]</scope>
    <source>
        <strain>SL476</strain>
    </source>
</reference>
<sequence>MSAQKPGLHPRNRHQHRYDLAALCQTTPELTSFLIRTPAGEQSVDFANPQAVKALNKALLAHFYAVTHWDIPPGFLCPPVPGRADYIHHLADLLGETTGSIPAQATILDVGVGANCIYPLIGVHEYGWRFTGSEVSDAAMSSAQAIIQANTGLSRAIRLRRQKDPAAIFTGIIHKNEFYDATLCNPPFHDSAAAARAGSERKRRNLGQNKDDALNFGGQQQELWCEGGEVAFIKKMIAESQTFRRQVLWFTTLVSRGENLPPLYRALTEAGAVKVVKKEMAQGQKQSRFIAWTFMGDDQRRRFITRKR</sequence>